<protein>
    <recommendedName>
        <fullName>Capsid protein</fullName>
    </recommendedName>
    <alternativeName>
        <fullName>Beta-A protein</fullName>
    </alternativeName>
    <alternativeName>
        <fullName>Coat protein</fullName>
    </alternativeName>
</protein>
<organism>
    <name type="scientific">Barley stripe mosaic virus</name>
    <name type="common">BSMV</name>
    <dbReference type="NCBI Taxonomy" id="12327"/>
    <lineage>
        <taxon>Viruses</taxon>
        <taxon>Riboviria</taxon>
        <taxon>Orthornavirae</taxon>
        <taxon>Kitrinoviricota</taxon>
        <taxon>Alsuviricetes</taxon>
        <taxon>Martellivirales</taxon>
        <taxon>Virgaviridae</taxon>
        <taxon>Hordeivirus</taxon>
    </lineage>
</organism>
<dbReference type="EMBL" id="X03854">
    <property type="protein sequence ID" value="CAA27484.1"/>
    <property type="molecule type" value="Genomic_RNA"/>
</dbReference>
<dbReference type="PIR" id="A04190">
    <property type="entry name" value="VCBVBV"/>
</dbReference>
<dbReference type="RefSeq" id="NP_604486.1">
    <property type="nucleotide sequence ID" value="NC_003481.1"/>
</dbReference>
<dbReference type="PDB" id="5A79">
    <property type="method" value="EM"/>
    <property type="resolution" value="4.10 A"/>
    <property type="chains" value="A=1-198"/>
</dbReference>
<dbReference type="PDB" id="5A7A">
    <property type="method" value="EM"/>
    <property type="resolution" value="4.10 A"/>
    <property type="chains" value="A=1-198"/>
</dbReference>
<dbReference type="PDBsum" id="5A79"/>
<dbReference type="PDBsum" id="5A7A"/>
<dbReference type="SMR" id="P04866"/>
<dbReference type="DIP" id="DIP-61804N"/>
<dbReference type="GeneID" id="962676"/>
<dbReference type="KEGG" id="vg:962676"/>
<dbReference type="OrthoDB" id="21347at10239"/>
<dbReference type="EvolutionaryTrace" id="P04866"/>
<dbReference type="Proteomes" id="UP000001667">
    <property type="component" value="Genome"/>
</dbReference>
<dbReference type="GO" id="GO:0019029">
    <property type="term" value="C:helical viral capsid"/>
    <property type="evidence" value="ECO:0007669"/>
    <property type="project" value="UniProtKB-KW"/>
</dbReference>
<dbReference type="GO" id="GO:0042802">
    <property type="term" value="F:identical protein binding"/>
    <property type="evidence" value="ECO:0000353"/>
    <property type="project" value="IntAct"/>
</dbReference>
<dbReference type="GO" id="GO:0005198">
    <property type="term" value="F:structural molecule activity"/>
    <property type="evidence" value="ECO:0007669"/>
    <property type="project" value="InterPro"/>
</dbReference>
<dbReference type="Gene3D" id="1.20.120.70">
    <property type="entry name" value="Tobacco mosaic virus-like, coat protein"/>
    <property type="match status" value="1"/>
</dbReference>
<dbReference type="InterPro" id="IPR001337">
    <property type="entry name" value="TMV-like_coat"/>
</dbReference>
<dbReference type="InterPro" id="IPR036417">
    <property type="entry name" value="TMV-like_coat_sf"/>
</dbReference>
<dbReference type="Pfam" id="PF00721">
    <property type="entry name" value="TMV_coat"/>
    <property type="match status" value="1"/>
</dbReference>
<dbReference type="SUPFAM" id="SSF47195">
    <property type="entry name" value="TMV-like viral coat proteins"/>
    <property type="match status" value="1"/>
</dbReference>
<comment type="function">
    <text evidence="2 3">Capsid protein self-assembles to form rod-shaped virions about 21,6 nm in diameter for the narrow nes and 22,4 for the wide ones, and 110-150 nm in length depending on the size of the encapsidated RNA (PubMed:23725818, PubMed:26278173). They display a helical symmetry of 23.2 subunits per turn of the viral helix and with a central canal enclosing the viral genomic RNA (PubMed:23725818).</text>
</comment>
<comment type="subunit">
    <text evidence="2 3">Interacts with itself.</text>
</comment>
<comment type="interaction">
    <interactant intactId="EBI-16170091">
        <id>P04866</id>
    </interactant>
    <interactant intactId="EBI-16170091">
        <id>P04866</id>
        <label>-</label>
    </interactant>
    <organismsDiffer>false</organismsDiffer>
    <experiments>2</experiments>
</comment>
<comment type="subcellular location">
    <subcellularLocation>
        <location evidence="2 3">Virion</location>
    </subcellularLocation>
</comment>
<comment type="miscellaneous">
    <text evidence="4">The genome of this virus consists of three linear, positive, single-stranded RNAs encapsidated in separate virions designated RNA-alpha, RNA-beta and RNA-gamma. Three proteins (alpha-A, beta-A and gamma-A) are translated directly from these genomic RNAs and the remaining proteins encoded on RNA-beta (beta-B, beta-C and beta-D) and RNA-gamma (gamma-B) are expressed via three subgenomic messenger RNAs.</text>
</comment>
<comment type="similarity">
    <text evidence="4">Belongs to the virgaviridae capsid protein family.</text>
</comment>
<sequence>MPNVSLTAKGGGHYIEDQWDTQVVEAGVFDDWWVHVEAWNKFLDNLRGINFSVASSRSQVAEYLAALDRDLPADVDRRFAGARGQIGSPNYLPAPKFFRLDKRTIAELTRLSRLTDQPHNNRDIELNRAKRATTNPSPPAQAPSENLTLRDVQPLKDSALHYQYVLIDLQSARLPVYTRKTFERELALEWIIPDAEEA</sequence>
<name>CAPSD_BSMV</name>
<keyword id="KW-0002">3D-structure</keyword>
<keyword id="KW-0167">Capsid protein</keyword>
<keyword id="KW-1139">Helical capsid protein</keyword>
<keyword id="KW-1185">Reference proteome</keyword>
<keyword id="KW-0946">Virion</keyword>
<accession>P04866</accession>
<feature type="chain" id="PRO_0000222488" description="Capsid protein">
    <location>
        <begin position="1"/>
        <end position="198"/>
    </location>
</feature>
<feature type="region of interest" description="Disordered" evidence="1">
    <location>
        <begin position="117"/>
        <end position="147"/>
    </location>
</feature>
<feature type="compositionally biased region" description="Basic and acidic residues" evidence="1">
    <location>
        <begin position="119"/>
        <end position="128"/>
    </location>
</feature>
<evidence type="ECO:0000256" key="1">
    <source>
        <dbReference type="SAM" id="MobiDB-lite"/>
    </source>
</evidence>
<evidence type="ECO:0000269" key="2">
    <source>
    </source>
</evidence>
<evidence type="ECO:0000269" key="3">
    <source>
    </source>
</evidence>
<evidence type="ECO:0000305" key="4"/>
<evidence type="ECO:0007744" key="5">
    <source>
        <dbReference type="PDB" id="5A79"/>
    </source>
</evidence>
<evidence type="ECO:0007744" key="6">
    <source>
        <dbReference type="PDB" id="5A7A"/>
    </source>
</evidence>
<reference key="1">
    <citation type="journal article" date="1986" name="Nucleic Acids Res.">
        <title>The complete nucleotide sequence of RNA beta from the type strain of barley stripe mosaic virus.</title>
        <authorList>
            <person name="Gustafson G."/>
            <person name="Armour S.L."/>
        </authorList>
    </citation>
    <scope>NUCLEOTIDE SEQUENCE [GENOMIC RNA]</scope>
    <source>
        <strain>ATCC PV43</strain>
    </source>
</reference>
<reference key="2">
    <citation type="journal article" date="2013" name="Virology">
        <title>Barley stripe mosaic virus: structure and relationship to the tobamoviruses.</title>
        <authorList>
            <person name="Kendall A."/>
            <person name="Williams D."/>
            <person name="Bian W."/>
            <person name="Stewart P.L."/>
            <person name="Stubbs G."/>
        </authorList>
    </citation>
    <scope>STRUCTURE BY ELECTRON MICROSCOPY (2.4 ANGSTROMS)</scope>
    <scope>FUNCTION</scope>
    <scope>SUBUNIT</scope>
    <scope>SUBCELLULAR LOCATION</scope>
</reference>
<reference evidence="5 6" key="3">
    <citation type="journal article" date="2015" name="Structure">
        <title>Novel Inter-Subunit Contacts in Barley Stripe Mosaic Virus Revealed by Cryo-Electron Microscopy.</title>
        <authorList>
            <person name="Clare D.K."/>
            <person name="Pechnikova E.V."/>
            <person name="Skurat E.V."/>
            <person name="Makarov V.V."/>
            <person name="Sokolova O.S."/>
            <person name="Solovyev A.G."/>
            <person name="Orlova E.V."/>
        </authorList>
    </citation>
    <scope>STRUCTURE BY ELECTRON MICROSCOPY (4.10 ANGSTROMS)</scope>
    <scope>FUNCTION</scope>
    <scope>SUBUNIT</scope>
    <scope>SUBCELLULAR LOCATION</scope>
</reference>
<organismHost>
    <name type="scientific">Hordeum vulgare</name>
    <name type="common">Barley</name>
    <dbReference type="NCBI Taxonomy" id="4513"/>
</organismHost>
<organismHost>
    <name type="scientific">Triticum aestivum</name>
    <name type="common">Wheat</name>
    <dbReference type="NCBI Taxonomy" id="4565"/>
</organismHost>
<proteinExistence type="evidence at protein level"/>